<dbReference type="EC" id="2.7.11.33" evidence="1"/>
<dbReference type="EC" id="2.7.4.28" evidence="1"/>
<dbReference type="EMBL" id="CP000563">
    <property type="protein sequence ID" value="ABN61982.1"/>
    <property type="molecule type" value="Genomic_DNA"/>
</dbReference>
<dbReference type="RefSeq" id="WP_006081952.1">
    <property type="nucleotide sequence ID" value="NC_009052.1"/>
</dbReference>
<dbReference type="SMR" id="A3D5G9"/>
<dbReference type="STRING" id="325240.Sbal_2489"/>
<dbReference type="KEGG" id="sbl:Sbal_2489"/>
<dbReference type="HOGENOM" id="CLU_046206_1_0_6"/>
<dbReference type="OrthoDB" id="9782201at2"/>
<dbReference type="Proteomes" id="UP000001557">
    <property type="component" value="Chromosome"/>
</dbReference>
<dbReference type="GO" id="GO:0043531">
    <property type="term" value="F:ADP binding"/>
    <property type="evidence" value="ECO:0007669"/>
    <property type="project" value="UniProtKB-UniRule"/>
</dbReference>
<dbReference type="GO" id="GO:0005524">
    <property type="term" value="F:ATP binding"/>
    <property type="evidence" value="ECO:0007669"/>
    <property type="project" value="InterPro"/>
</dbReference>
<dbReference type="GO" id="GO:0016776">
    <property type="term" value="F:phosphotransferase activity, phosphate group as acceptor"/>
    <property type="evidence" value="ECO:0007669"/>
    <property type="project" value="UniProtKB-UniRule"/>
</dbReference>
<dbReference type="GO" id="GO:0004674">
    <property type="term" value="F:protein serine/threonine kinase activity"/>
    <property type="evidence" value="ECO:0007669"/>
    <property type="project" value="UniProtKB-UniRule"/>
</dbReference>
<dbReference type="HAMAP" id="MF_01062">
    <property type="entry name" value="PSRP"/>
    <property type="match status" value="1"/>
</dbReference>
<dbReference type="InterPro" id="IPR005177">
    <property type="entry name" value="Kinase-pyrophosphorylase"/>
</dbReference>
<dbReference type="InterPro" id="IPR026530">
    <property type="entry name" value="PSRP"/>
</dbReference>
<dbReference type="NCBIfam" id="NF003742">
    <property type="entry name" value="PRK05339.1"/>
    <property type="match status" value="1"/>
</dbReference>
<dbReference type="PANTHER" id="PTHR31756">
    <property type="entry name" value="PYRUVATE, PHOSPHATE DIKINASE REGULATORY PROTEIN 1, CHLOROPLASTIC"/>
    <property type="match status" value="1"/>
</dbReference>
<dbReference type="PANTHER" id="PTHR31756:SF3">
    <property type="entry name" value="PYRUVATE, PHOSPHATE DIKINASE REGULATORY PROTEIN 1, CHLOROPLASTIC"/>
    <property type="match status" value="1"/>
</dbReference>
<dbReference type="Pfam" id="PF03618">
    <property type="entry name" value="Kinase-PPPase"/>
    <property type="match status" value="1"/>
</dbReference>
<reference key="1">
    <citation type="submission" date="2007-02" db="EMBL/GenBank/DDBJ databases">
        <title>Complete sequence of chromosome of Shewanella baltica OS155.</title>
        <authorList>
            <consortium name="US DOE Joint Genome Institute"/>
            <person name="Copeland A."/>
            <person name="Lucas S."/>
            <person name="Lapidus A."/>
            <person name="Barry K."/>
            <person name="Detter J.C."/>
            <person name="Glavina del Rio T."/>
            <person name="Hammon N."/>
            <person name="Israni S."/>
            <person name="Dalin E."/>
            <person name="Tice H."/>
            <person name="Pitluck S."/>
            <person name="Sims D.R."/>
            <person name="Brettin T."/>
            <person name="Bruce D."/>
            <person name="Han C."/>
            <person name="Tapia R."/>
            <person name="Brainard J."/>
            <person name="Schmutz J."/>
            <person name="Larimer F."/>
            <person name="Land M."/>
            <person name="Hauser L."/>
            <person name="Kyrpides N."/>
            <person name="Mikhailova N."/>
            <person name="Brettar I."/>
            <person name="Klappenbach J."/>
            <person name="Konstantinidis K."/>
            <person name="Rodrigues J."/>
            <person name="Tiedje J."/>
            <person name="Richardson P."/>
        </authorList>
    </citation>
    <scope>NUCLEOTIDE SEQUENCE [LARGE SCALE GENOMIC DNA]</scope>
    <source>
        <strain>OS155 / ATCC BAA-1091</strain>
    </source>
</reference>
<sequence length="270" mass="30744">MAPKVFYISDGTAITAEVFGHAVLSQFPLEFESLTIPFVETLTKAEQVKRQINDCFITTGERPLVFHSIVKAEIRDIIYSSEGLDYDFLNTFVAPLEQHLGVSASPVLHRTHGKANHGYEARIDAINFAMDNDDGQTMKHMDQADLVLLGVSRCGKTPSSLYLSMQFGIKAANYPFTEDDMDNLKLPDALKRNKKKLFGLTIDPVRLHEIRQSRMENSRYSSLKQCRLEVKEVEMLFKRERIPYIDTTNHSVEEIATKILDVTGLERHMF</sequence>
<keyword id="KW-0418">Kinase</keyword>
<keyword id="KW-0547">Nucleotide-binding</keyword>
<keyword id="KW-1185">Reference proteome</keyword>
<keyword id="KW-0723">Serine/threonine-protein kinase</keyword>
<keyword id="KW-0808">Transferase</keyword>
<gene>
    <name type="ordered locus">Sbal_2489</name>
</gene>
<protein>
    <recommendedName>
        <fullName evidence="1">Putative phosphoenolpyruvate synthase regulatory protein</fullName>
        <shortName evidence="1">PEP synthase regulatory protein</shortName>
        <shortName evidence="1">PSRP</shortName>
        <ecNumber evidence="1">2.7.11.33</ecNumber>
        <ecNumber evidence="1">2.7.4.28</ecNumber>
    </recommendedName>
    <alternativeName>
        <fullName evidence="1">Pyruvate, water dikinase regulatory protein</fullName>
    </alternativeName>
</protein>
<evidence type="ECO:0000255" key="1">
    <source>
        <dbReference type="HAMAP-Rule" id="MF_01062"/>
    </source>
</evidence>
<organism>
    <name type="scientific">Shewanella baltica (strain OS155 / ATCC BAA-1091)</name>
    <dbReference type="NCBI Taxonomy" id="325240"/>
    <lineage>
        <taxon>Bacteria</taxon>
        <taxon>Pseudomonadati</taxon>
        <taxon>Pseudomonadota</taxon>
        <taxon>Gammaproteobacteria</taxon>
        <taxon>Alteromonadales</taxon>
        <taxon>Shewanellaceae</taxon>
        <taxon>Shewanella</taxon>
    </lineage>
</organism>
<proteinExistence type="inferred from homology"/>
<comment type="function">
    <text evidence="1">Bifunctional serine/threonine kinase and phosphorylase involved in the regulation of the phosphoenolpyruvate synthase (PEPS) by catalyzing its phosphorylation/dephosphorylation.</text>
</comment>
<comment type="catalytic activity">
    <reaction evidence="1">
        <text>[pyruvate, water dikinase] + ADP = [pyruvate, water dikinase]-phosphate + AMP + H(+)</text>
        <dbReference type="Rhea" id="RHEA:46020"/>
        <dbReference type="Rhea" id="RHEA-COMP:11425"/>
        <dbReference type="Rhea" id="RHEA-COMP:11426"/>
        <dbReference type="ChEBI" id="CHEBI:15378"/>
        <dbReference type="ChEBI" id="CHEBI:43176"/>
        <dbReference type="ChEBI" id="CHEBI:68546"/>
        <dbReference type="ChEBI" id="CHEBI:456215"/>
        <dbReference type="ChEBI" id="CHEBI:456216"/>
        <dbReference type="EC" id="2.7.11.33"/>
    </reaction>
</comment>
<comment type="catalytic activity">
    <reaction evidence="1">
        <text>[pyruvate, water dikinase]-phosphate + phosphate + H(+) = [pyruvate, water dikinase] + diphosphate</text>
        <dbReference type="Rhea" id="RHEA:48580"/>
        <dbReference type="Rhea" id="RHEA-COMP:11425"/>
        <dbReference type="Rhea" id="RHEA-COMP:11426"/>
        <dbReference type="ChEBI" id="CHEBI:15378"/>
        <dbReference type="ChEBI" id="CHEBI:33019"/>
        <dbReference type="ChEBI" id="CHEBI:43176"/>
        <dbReference type="ChEBI" id="CHEBI:43474"/>
        <dbReference type="ChEBI" id="CHEBI:68546"/>
        <dbReference type="EC" id="2.7.4.28"/>
    </reaction>
</comment>
<comment type="similarity">
    <text evidence="1">Belongs to the pyruvate, phosphate/water dikinase regulatory protein family. PSRP subfamily.</text>
</comment>
<feature type="chain" id="PRO_0000316732" description="Putative phosphoenolpyruvate synthase regulatory protein">
    <location>
        <begin position="1"/>
        <end position="270"/>
    </location>
</feature>
<feature type="binding site" evidence="1">
    <location>
        <begin position="150"/>
        <end position="157"/>
    </location>
    <ligand>
        <name>ADP</name>
        <dbReference type="ChEBI" id="CHEBI:456216"/>
    </ligand>
</feature>
<name>PSRP_SHEB5</name>
<accession>A3D5G9</accession>